<gene>
    <name evidence="1" type="primary">rpoA</name>
    <name type="ordered locus">MXAN_3326</name>
</gene>
<keyword id="KW-0240">DNA-directed RNA polymerase</keyword>
<keyword id="KW-0548">Nucleotidyltransferase</keyword>
<keyword id="KW-1185">Reference proteome</keyword>
<keyword id="KW-0804">Transcription</keyword>
<keyword id="KW-0808">Transferase</keyword>
<feature type="chain" id="PRO_0000264519" description="DNA-directed RNA polymerase subunit alpha">
    <location>
        <begin position="1"/>
        <end position="340"/>
    </location>
</feature>
<feature type="region of interest" description="Alpha N-terminal domain (alpha-NTD)" evidence="1">
    <location>
        <begin position="1"/>
        <end position="238"/>
    </location>
</feature>
<feature type="region of interest" description="Alpha C-terminal domain (alpha-CTD)" evidence="1">
    <location>
        <begin position="253"/>
        <end position="340"/>
    </location>
</feature>
<name>RPOA_MYXXD</name>
<proteinExistence type="inferred from homology"/>
<protein>
    <recommendedName>
        <fullName evidence="1">DNA-directed RNA polymerase subunit alpha</fullName>
        <shortName evidence="1">RNAP subunit alpha</shortName>
        <ecNumber evidence="1">2.7.7.6</ecNumber>
    </recommendedName>
    <alternativeName>
        <fullName evidence="1">RNA polymerase subunit alpha</fullName>
    </alternativeName>
    <alternativeName>
        <fullName evidence="1">Transcriptase subunit alpha</fullName>
    </alternativeName>
</protein>
<comment type="function">
    <text evidence="1">DNA-dependent RNA polymerase catalyzes the transcription of DNA into RNA using the four ribonucleoside triphosphates as substrates.</text>
</comment>
<comment type="catalytic activity">
    <reaction evidence="1">
        <text>RNA(n) + a ribonucleoside 5'-triphosphate = RNA(n+1) + diphosphate</text>
        <dbReference type="Rhea" id="RHEA:21248"/>
        <dbReference type="Rhea" id="RHEA-COMP:14527"/>
        <dbReference type="Rhea" id="RHEA-COMP:17342"/>
        <dbReference type="ChEBI" id="CHEBI:33019"/>
        <dbReference type="ChEBI" id="CHEBI:61557"/>
        <dbReference type="ChEBI" id="CHEBI:140395"/>
        <dbReference type="EC" id="2.7.7.6"/>
    </reaction>
</comment>
<comment type="subunit">
    <text evidence="1">Homodimer. The RNAP catalytic core consists of 2 alpha, 1 beta, 1 beta' and 1 omega subunit. When a sigma factor is associated with the core the holoenzyme is formed, which can initiate transcription.</text>
</comment>
<comment type="domain">
    <text evidence="1">The N-terminal domain is essential for RNAP assembly and basal transcription, whereas the C-terminal domain is involved in interaction with transcriptional regulators and with upstream promoter elements.</text>
</comment>
<comment type="similarity">
    <text evidence="1">Belongs to the RNA polymerase alpha chain family.</text>
</comment>
<sequence>MADTFVAKNWRDLIKPRRMEVDQDSATPTYGKFVAEPLERGFGTTLGNSLRRVLLSSLQGAAITTVKIEGVDHEFTTIPEVSEDVTDVVLNLKEVLLRMHTNETKTLRIEAEGPKEVKAGDIITDPDTEILNPGHHICTISEGGKLRMELTCRRGRGYTPANVNKVAGSPIGTIPIDSLFSPIRKVNYQVTNARVGQVTDFDKLSLEVWTDGSVSPQDAVAYAAKIIKEQLTVFVNFDETEEPVVAEAPKEEAKLNENLFRSVDELELSVRSANCLQQANIKSIGDLVQRTEAEMLKTKNFGRKSLKEIKEILAEMGLSLGMKLENWPPKQAPAPAQPKA</sequence>
<accession>Q1D748</accession>
<organism>
    <name type="scientific">Myxococcus xanthus (strain DK1622)</name>
    <dbReference type="NCBI Taxonomy" id="246197"/>
    <lineage>
        <taxon>Bacteria</taxon>
        <taxon>Pseudomonadati</taxon>
        <taxon>Myxococcota</taxon>
        <taxon>Myxococcia</taxon>
        <taxon>Myxococcales</taxon>
        <taxon>Cystobacterineae</taxon>
        <taxon>Myxococcaceae</taxon>
        <taxon>Myxococcus</taxon>
    </lineage>
</organism>
<dbReference type="EC" id="2.7.7.6" evidence="1"/>
<dbReference type="EMBL" id="CP000113">
    <property type="protein sequence ID" value="ABF87159.1"/>
    <property type="molecule type" value="Genomic_DNA"/>
</dbReference>
<dbReference type="RefSeq" id="WP_011553361.1">
    <property type="nucleotide sequence ID" value="NC_008095.1"/>
</dbReference>
<dbReference type="SMR" id="Q1D748"/>
<dbReference type="STRING" id="246197.MXAN_3326"/>
<dbReference type="EnsemblBacteria" id="ABF87159">
    <property type="protein sequence ID" value="ABF87159"/>
    <property type="gene ID" value="MXAN_3326"/>
</dbReference>
<dbReference type="GeneID" id="41360679"/>
<dbReference type="KEGG" id="mxa:MXAN_3326"/>
<dbReference type="eggNOG" id="COG0202">
    <property type="taxonomic scope" value="Bacteria"/>
</dbReference>
<dbReference type="HOGENOM" id="CLU_053084_0_1_7"/>
<dbReference type="OrthoDB" id="9805706at2"/>
<dbReference type="Proteomes" id="UP000002402">
    <property type="component" value="Chromosome"/>
</dbReference>
<dbReference type="GO" id="GO:0005737">
    <property type="term" value="C:cytoplasm"/>
    <property type="evidence" value="ECO:0007669"/>
    <property type="project" value="UniProtKB-ARBA"/>
</dbReference>
<dbReference type="GO" id="GO:0000428">
    <property type="term" value="C:DNA-directed RNA polymerase complex"/>
    <property type="evidence" value="ECO:0007669"/>
    <property type="project" value="UniProtKB-KW"/>
</dbReference>
<dbReference type="GO" id="GO:0003677">
    <property type="term" value="F:DNA binding"/>
    <property type="evidence" value="ECO:0007669"/>
    <property type="project" value="UniProtKB-UniRule"/>
</dbReference>
<dbReference type="GO" id="GO:0003899">
    <property type="term" value="F:DNA-directed RNA polymerase activity"/>
    <property type="evidence" value="ECO:0007669"/>
    <property type="project" value="UniProtKB-UniRule"/>
</dbReference>
<dbReference type="GO" id="GO:0046983">
    <property type="term" value="F:protein dimerization activity"/>
    <property type="evidence" value="ECO:0007669"/>
    <property type="project" value="InterPro"/>
</dbReference>
<dbReference type="GO" id="GO:0006351">
    <property type="term" value="P:DNA-templated transcription"/>
    <property type="evidence" value="ECO:0007669"/>
    <property type="project" value="UniProtKB-UniRule"/>
</dbReference>
<dbReference type="CDD" id="cd06928">
    <property type="entry name" value="RNAP_alpha_NTD"/>
    <property type="match status" value="1"/>
</dbReference>
<dbReference type="FunFam" id="1.10.150.20:FF:000001">
    <property type="entry name" value="DNA-directed RNA polymerase subunit alpha"/>
    <property type="match status" value="1"/>
</dbReference>
<dbReference type="FunFam" id="2.170.120.12:FF:000001">
    <property type="entry name" value="DNA-directed RNA polymerase subunit alpha"/>
    <property type="match status" value="1"/>
</dbReference>
<dbReference type="Gene3D" id="1.10.150.20">
    <property type="entry name" value="5' to 3' exonuclease, C-terminal subdomain"/>
    <property type="match status" value="1"/>
</dbReference>
<dbReference type="Gene3D" id="2.170.120.12">
    <property type="entry name" value="DNA-directed RNA polymerase, insert domain"/>
    <property type="match status" value="1"/>
</dbReference>
<dbReference type="Gene3D" id="3.30.1360.10">
    <property type="entry name" value="RNA polymerase, RBP11-like subunit"/>
    <property type="match status" value="1"/>
</dbReference>
<dbReference type="HAMAP" id="MF_00059">
    <property type="entry name" value="RNApol_bact_RpoA"/>
    <property type="match status" value="1"/>
</dbReference>
<dbReference type="InterPro" id="IPR011262">
    <property type="entry name" value="DNA-dir_RNA_pol_insert"/>
</dbReference>
<dbReference type="InterPro" id="IPR011263">
    <property type="entry name" value="DNA-dir_RNA_pol_RpoA/D/Rpb3"/>
</dbReference>
<dbReference type="InterPro" id="IPR011773">
    <property type="entry name" value="DNA-dir_RpoA"/>
</dbReference>
<dbReference type="InterPro" id="IPR036603">
    <property type="entry name" value="RBP11-like"/>
</dbReference>
<dbReference type="InterPro" id="IPR011260">
    <property type="entry name" value="RNAP_asu_C"/>
</dbReference>
<dbReference type="InterPro" id="IPR036643">
    <property type="entry name" value="RNApol_insert_sf"/>
</dbReference>
<dbReference type="NCBIfam" id="NF003513">
    <property type="entry name" value="PRK05182.1-2"/>
    <property type="match status" value="1"/>
</dbReference>
<dbReference type="NCBIfam" id="NF003515">
    <property type="entry name" value="PRK05182.2-1"/>
    <property type="match status" value="1"/>
</dbReference>
<dbReference type="NCBIfam" id="NF003519">
    <property type="entry name" value="PRK05182.2-5"/>
    <property type="match status" value="1"/>
</dbReference>
<dbReference type="NCBIfam" id="TIGR02027">
    <property type="entry name" value="rpoA"/>
    <property type="match status" value="1"/>
</dbReference>
<dbReference type="Pfam" id="PF01000">
    <property type="entry name" value="RNA_pol_A_bac"/>
    <property type="match status" value="1"/>
</dbReference>
<dbReference type="Pfam" id="PF03118">
    <property type="entry name" value="RNA_pol_A_CTD"/>
    <property type="match status" value="1"/>
</dbReference>
<dbReference type="Pfam" id="PF01193">
    <property type="entry name" value="RNA_pol_L"/>
    <property type="match status" value="1"/>
</dbReference>
<dbReference type="SMART" id="SM00662">
    <property type="entry name" value="RPOLD"/>
    <property type="match status" value="1"/>
</dbReference>
<dbReference type="SUPFAM" id="SSF47789">
    <property type="entry name" value="C-terminal domain of RNA polymerase alpha subunit"/>
    <property type="match status" value="1"/>
</dbReference>
<dbReference type="SUPFAM" id="SSF56553">
    <property type="entry name" value="Insert subdomain of RNA polymerase alpha subunit"/>
    <property type="match status" value="1"/>
</dbReference>
<dbReference type="SUPFAM" id="SSF55257">
    <property type="entry name" value="RBP11-like subunits of RNA polymerase"/>
    <property type="match status" value="1"/>
</dbReference>
<evidence type="ECO:0000255" key="1">
    <source>
        <dbReference type="HAMAP-Rule" id="MF_00059"/>
    </source>
</evidence>
<reference key="1">
    <citation type="journal article" date="2006" name="Proc. Natl. Acad. Sci. U.S.A.">
        <title>Evolution of sensory complexity recorded in a myxobacterial genome.</title>
        <authorList>
            <person name="Goldman B.S."/>
            <person name="Nierman W.C."/>
            <person name="Kaiser D."/>
            <person name="Slater S.C."/>
            <person name="Durkin A.S."/>
            <person name="Eisen J.A."/>
            <person name="Ronning C.M."/>
            <person name="Barbazuk W.B."/>
            <person name="Blanchard M."/>
            <person name="Field C."/>
            <person name="Halling C."/>
            <person name="Hinkle G."/>
            <person name="Iartchuk O."/>
            <person name="Kim H.S."/>
            <person name="Mackenzie C."/>
            <person name="Madupu R."/>
            <person name="Miller N."/>
            <person name="Shvartsbeyn A."/>
            <person name="Sullivan S.A."/>
            <person name="Vaudin M."/>
            <person name="Wiegand R."/>
            <person name="Kaplan H.B."/>
        </authorList>
    </citation>
    <scope>NUCLEOTIDE SEQUENCE [LARGE SCALE GENOMIC DNA]</scope>
    <source>
        <strain>DK1622</strain>
    </source>
</reference>